<gene>
    <name evidence="1" type="primary">infA</name>
    <name type="ordered locus">YPN_2610</name>
    <name type="ORF">YP516_2942</name>
</gene>
<evidence type="ECO:0000255" key="1">
    <source>
        <dbReference type="HAMAP-Rule" id="MF_00075"/>
    </source>
</evidence>
<dbReference type="EMBL" id="CP000305">
    <property type="protein sequence ID" value="ABG18938.1"/>
    <property type="molecule type" value="Genomic_DNA"/>
</dbReference>
<dbReference type="EMBL" id="ACNQ01000017">
    <property type="protein sequence ID" value="EEO75057.1"/>
    <property type="molecule type" value="Genomic_DNA"/>
</dbReference>
<dbReference type="RefSeq" id="WP_002211347.1">
    <property type="nucleotide sequence ID" value="NZ_ACNQ01000017.1"/>
</dbReference>
<dbReference type="SMR" id="Q1CGE2"/>
<dbReference type="GeneID" id="98387575"/>
<dbReference type="KEGG" id="ypn:YPN_2610"/>
<dbReference type="HOGENOM" id="CLU_151267_1_0_6"/>
<dbReference type="Proteomes" id="UP000008936">
    <property type="component" value="Chromosome"/>
</dbReference>
<dbReference type="GO" id="GO:0005829">
    <property type="term" value="C:cytosol"/>
    <property type="evidence" value="ECO:0007669"/>
    <property type="project" value="TreeGrafter"/>
</dbReference>
<dbReference type="GO" id="GO:0043022">
    <property type="term" value="F:ribosome binding"/>
    <property type="evidence" value="ECO:0007669"/>
    <property type="project" value="UniProtKB-UniRule"/>
</dbReference>
<dbReference type="GO" id="GO:0019843">
    <property type="term" value="F:rRNA binding"/>
    <property type="evidence" value="ECO:0007669"/>
    <property type="project" value="UniProtKB-UniRule"/>
</dbReference>
<dbReference type="GO" id="GO:0003743">
    <property type="term" value="F:translation initiation factor activity"/>
    <property type="evidence" value="ECO:0007669"/>
    <property type="project" value="UniProtKB-UniRule"/>
</dbReference>
<dbReference type="CDD" id="cd04451">
    <property type="entry name" value="S1_IF1"/>
    <property type="match status" value="1"/>
</dbReference>
<dbReference type="FunFam" id="2.40.50.140:FF:000002">
    <property type="entry name" value="Translation initiation factor IF-1"/>
    <property type="match status" value="1"/>
</dbReference>
<dbReference type="Gene3D" id="2.40.50.140">
    <property type="entry name" value="Nucleic acid-binding proteins"/>
    <property type="match status" value="1"/>
</dbReference>
<dbReference type="HAMAP" id="MF_00075">
    <property type="entry name" value="IF_1"/>
    <property type="match status" value="1"/>
</dbReference>
<dbReference type="InterPro" id="IPR012340">
    <property type="entry name" value="NA-bd_OB-fold"/>
</dbReference>
<dbReference type="InterPro" id="IPR006196">
    <property type="entry name" value="RNA-binding_domain_S1_IF1"/>
</dbReference>
<dbReference type="InterPro" id="IPR003029">
    <property type="entry name" value="S1_domain"/>
</dbReference>
<dbReference type="InterPro" id="IPR004368">
    <property type="entry name" value="TIF_IF1"/>
</dbReference>
<dbReference type="NCBIfam" id="TIGR00008">
    <property type="entry name" value="infA"/>
    <property type="match status" value="1"/>
</dbReference>
<dbReference type="PANTHER" id="PTHR33370">
    <property type="entry name" value="TRANSLATION INITIATION FACTOR IF-1, CHLOROPLASTIC"/>
    <property type="match status" value="1"/>
</dbReference>
<dbReference type="PANTHER" id="PTHR33370:SF1">
    <property type="entry name" value="TRANSLATION INITIATION FACTOR IF-1, CHLOROPLASTIC"/>
    <property type="match status" value="1"/>
</dbReference>
<dbReference type="Pfam" id="PF01176">
    <property type="entry name" value="eIF-1a"/>
    <property type="match status" value="1"/>
</dbReference>
<dbReference type="SMART" id="SM00316">
    <property type="entry name" value="S1"/>
    <property type="match status" value="1"/>
</dbReference>
<dbReference type="SUPFAM" id="SSF50249">
    <property type="entry name" value="Nucleic acid-binding proteins"/>
    <property type="match status" value="1"/>
</dbReference>
<dbReference type="PROSITE" id="PS50832">
    <property type="entry name" value="S1_IF1_TYPE"/>
    <property type="match status" value="1"/>
</dbReference>
<reference key="1">
    <citation type="journal article" date="2006" name="J. Bacteriol.">
        <title>Complete genome sequence of Yersinia pestis strains Antiqua and Nepal516: evidence of gene reduction in an emerging pathogen.</title>
        <authorList>
            <person name="Chain P.S.G."/>
            <person name="Hu P."/>
            <person name="Malfatti S.A."/>
            <person name="Radnedge L."/>
            <person name="Larimer F."/>
            <person name="Vergez L.M."/>
            <person name="Worsham P."/>
            <person name="Chu M.C."/>
            <person name="Andersen G.L."/>
        </authorList>
    </citation>
    <scope>NUCLEOTIDE SEQUENCE [LARGE SCALE GENOMIC DNA]</scope>
    <source>
        <strain>Nepal516</strain>
    </source>
</reference>
<reference key="2">
    <citation type="submission" date="2009-04" db="EMBL/GenBank/DDBJ databases">
        <title>Yersinia pestis Nepal516A whole genome shotgun sequencing project.</title>
        <authorList>
            <person name="Plunkett G. III"/>
            <person name="Anderson B.D."/>
            <person name="Baumler D.J."/>
            <person name="Burland V."/>
            <person name="Cabot E.L."/>
            <person name="Glasner J.D."/>
            <person name="Mau B."/>
            <person name="Neeno-Eckwall E."/>
            <person name="Perna N.T."/>
            <person name="Munk A.C."/>
            <person name="Tapia R."/>
            <person name="Green L.D."/>
            <person name="Rogers Y.C."/>
            <person name="Detter J.C."/>
            <person name="Bruce D.C."/>
            <person name="Brettin T.S."/>
        </authorList>
    </citation>
    <scope>NUCLEOTIDE SEQUENCE [LARGE SCALE GENOMIC DNA]</scope>
    <source>
        <strain>Nepal516</strain>
    </source>
</reference>
<sequence length="72" mass="8236">MAKEDNIEMQGTVLDTLPNTMFRVELENGHVVTAHISGKMRKNYIRILTGDKVTVELTPYDLSKGRIVFRSR</sequence>
<organism>
    <name type="scientific">Yersinia pestis bv. Antiqua (strain Nepal516)</name>
    <dbReference type="NCBI Taxonomy" id="377628"/>
    <lineage>
        <taxon>Bacteria</taxon>
        <taxon>Pseudomonadati</taxon>
        <taxon>Pseudomonadota</taxon>
        <taxon>Gammaproteobacteria</taxon>
        <taxon>Enterobacterales</taxon>
        <taxon>Yersiniaceae</taxon>
        <taxon>Yersinia</taxon>
    </lineage>
</organism>
<protein>
    <recommendedName>
        <fullName evidence="1">Translation initiation factor IF-1</fullName>
    </recommendedName>
</protein>
<comment type="function">
    <text evidence="1">One of the essential components for the initiation of protein synthesis. Stabilizes the binding of IF-2 and IF-3 on the 30S subunit to which N-formylmethionyl-tRNA(fMet) subsequently binds. Helps modulate mRNA selection, yielding the 30S pre-initiation complex (PIC). Upon addition of the 50S ribosomal subunit IF-1, IF-2 and IF-3 are released leaving the mature 70S translation initiation complex.</text>
</comment>
<comment type="subunit">
    <text evidence="1">Component of the 30S ribosomal translation pre-initiation complex which assembles on the 30S ribosome in the order IF-2 and IF-3, IF-1 and N-formylmethionyl-tRNA(fMet); mRNA recruitment can occur at any time during PIC assembly.</text>
</comment>
<comment type="subcellular location">
    <subcellularLocation>
        <location evidence="1">Cytoplasm</location>
    </subcellularLocation>
</comment>
<comment type="similarity">
    <text evidence="1">Belongs to the IF-1 family.</text>
</comment>
<feature type="chain" id="PRO_0000263901" description="Translation initiation factor IF-1">
    <location>
        <begin position="1"/>
        <end position="72"/>
    </location>
</feature>
<feature type="domain" description="S1-like" evidence="1">
    <location>
        <begin position="1"/>
        <end position="72"/>
    </location>
</feature>
<accession>Q1CGE2</accession>
<accession>C4GVV7</accession>
<keyword id="KW-0963">Cytoplasm</keyword>
<keyword id="KW-0396">Initiation factor</keyword>
<keyword id="KW-0648">Protein biosynthesis</keyword>
<keyword id="KW-0694">RNA-binding</keyword>
<keyword id="KW-0699">rRNA-binding</keyword>
<name>IF1_YERPN</name>
<proteinExistence type="inferred from homology"/>